<gene>
    <name evidence="1" type="primary">hemA</name>
    <name type="ordered locus">KRH_08480</name>
</gene>
<evidence type="ECO:0000255" key="1">
    <source>
        <dbReference type="HAMAP-Rule" id="MF_00087"/>
    </source>
</evidence>
<evidence type="ECO:0000256" key="2">
    <source>
        <dbReference type="SAM" id="MobiDB-lite"/>
    </source>
</evidence>
<accession>B2GL19</accession>
<keyword id="KW-0521">NADP</keyword>
<keyword id="KW-0560">Oxidoreductase</keyword>
<keyword id="KW-0627">Porphyrin biosynthesis</keyword>
<keyword id="KW-1185">Reference proteome</keyword>
<reference key="1">
    <citation type="journal article" date="2008" name="J. Bacteriol.">
        <title>Complete genome sequence of the soil actinomycete Kocuria rhizophila.</title>
        <authorList>
            <person name="Takarada H."/>
            <person name="Sekine M."/>
            <person name="Kosugi H."/>
            <person name="Matsuo Y."/>
            <person name="Fujisawa T."/>
            <person name="Omata S."/>
            <person name="Kishi E."/>
            <person name="Shimizu A."/>
            <person name="Tsukatani N."/>
            <person name="Tanikawa S."/>
            <person name="Fujita N."/>
            <person name="Harayama S."/>
        </authorList>
    </citation>
    <scope>NUCLEOTIDE SEQUENCE [LARGE SCALE GENOMIC DNA]</scope>
    <source>
        <strain>ATCC 9341 / DSM 348 / NBRC 103217 / DC2201</strain>
    </source>
</reference>
<proteinExistence type="inferred from homology"/>
<dbReference type="EC" id="1.2.1.70" evidence="1"/>
<dbReference type="EMBL" id="AP009152">
    <property type="protein sequence ID" value="BAG29195.1"/>
    <property type="molecule type" value="Genomic_DNA"/>
</dbReference>
<dbReference type="RefSeq" id="WP_012397916.1">
    <property type="nucleotide sequence ID" value="NC_010617.1"/>
</dbReference>
<dbReference type="SMR" id="B2GL19"/>
<dbReference type="STRING" id="378753.KRH_08480"/>
<dbReference type="KEGG" id="krh:KRH_08480"/>
<dbReference type="eggNOG" id="COG0373">
    <property type="taxonomic scope" value="Bacteria"/>
</dbReference>
<dbReference type="HOGENOM" id="CLU_035113_4_1_11"/>
<dbReference type="OrthoDB" id="110209at2"/>
<dbReference type="UniPathway" id="UPA00251">
    <property type="reaction ID" value="UER00316"/>
</dbReference>
<dbReference type="Proteomes" id="UP000008838">
    <property type="component" value="Chromosome"/>
</dbReference>
<dbReference type="GO" id="GO:0008883">
    <property type="term" value="F:glutamyl-tRNA reductase activity"/>
    <property type="evidence" value="ECO:0007669"/>
    <property type="project" value="UniProtKB-UniRule"/>
</dbReference>
<dbReference type="GO" id="GO:0050661">
    <property type="term" value="F:NADP binding"/>
    <property type="evidence" value="ECO:0007669"/>
    <property type="project" value="InterPro"/>
</dbReference>
<dbReference type="GO" id="GO:0019353">
    <property type="term" value="P:protoporphyrinogen IX biosynthetic process from glutamate"/>
    <property type="evidence" value="ECO:0007669"/>
    <property type="project" value="TreeGrafter"/>
</dbReference>
<dbReference type="Gene3D" id="3.30.460.30">
    <property type="entry name" value="Glutamyl-tRNA reductase, N-terminal domain"/>
    <property type="match status" value="1"/>
</dbReference>
<dbReference type="Gene3D" id="3.40.50.720">
    <property type="entry name" value="NAD(P)-binding Rossmann-like Domain"/>
    <property type="match status" value="1"/>
</dbReference>
<dbReference type="HAMAP" id="MF_00087">
    <property type="entry name" value="Glu_tRNA_reductase"/>
    <property type="match status" value="1"/>
</dbReference>
<dbReference type="InterPro" id="IPR000343">
    <property type="entry name" value="4pyrrol_synth_GluRdtase"/>
</dbReference>
<dbReference type="InterPro" id="IPR015896">
    <property type="entry name" value="4pyrrol_synth_GluRdtase_dimer"/>
</dbReference>
<dbReference type="InterPro" id="IPR015895">
    <property type="entry name" value="4pyrrol_synth_GluRdtase_N"/>
</dbReference>
<dbReference type="InterPro" id="IPR018214">
    <property type="entry name" value="GluRdtase_CS"/>
</dbReference>
<dbReference type="InterPro" id="IPR036453">
    <property type="entry name" value="GluRdtase_dimer_dom_sf"/>
</dbReference>
<dbReference type="InterPro" id="IPR036343">
    <property type="entry name" value="GluRdtase_N_sf"/>
</dbReference>
<dbReference type="InterPro" id="IPR036291">
    <property type="entry name" value="NAD(P)-bd_dom_sf"/>
</dbReference>
<dbReference type="InterPro" id="IPR006151">
    <property type="entry name" value="Shikm_DH/Glu-tRNA_Rdtase"/>
</dbReference>
<dbReference type="NCBIfam" id="NF000750">
    <property type="entry name" value="PRK00045.3-4"/>
    <property type="match status" value="1"/>
</dbReference>
<dbReference type="PANTHER" id="PTHR43013">
    <property type="entry name" value="GLUTAMYL-TRNA REDUCTASE"/>
    <property type="match status" value="1"/>
</dbReference>
<dbReference type="PANTHER" id="PTHR43013:SF1">
    <property type="entry name" value="GLUTAMYL-TRNA REDUCTASE"/>
    <property type="match status" value="1"/>
</dbReference>
<dbReference type="Pfam" id="PF00745">
    <property type="entry name" value="GlutR_dimer"/>
    <property type="match status" value="1"/>
</dbReference>
<dbReference type="Pfam" id="PF05201">
    <property type="entry name" value="GlutR_N"/>
    <property type="match status" value="1"/>
</dbReference>
<dbReference type="Pfam" id="PF01488">
    <property type="entry name" value="Shikimate_DH"/>
    <property type="match status" value="1"/>
</dbReference>
<dbReference type="PIRSF" id="PIRSF000445">
    <property type="entry name" value="4pyrrol_synth_GluRdtase"/>
    <property type="match status" value="1"/>
</dbReference>
<dbReference type="SUPFAM" id="SSF69742">
    <property type="entry name" value="Glutamyl tRNA-reductase catalytic, N-terminal domain"/>
    <property type="match status" value="1"/>
</dbReference>
<dbReference type="SUPFAM" id="SSF69075">
    <property type="entry name" value="Glutamyl tRNA-reductase dimerization domain"/>
    <property type="match status" value="1"/>
</dbReference>
<dbReference type="SUPFAM" id="SSF51735">
    <property type="entry name" value="NAD(P)-binding Rossmann-fold domains"/>
    <property type="match status" value="1"/>
</dbReference>
<dbReference type="PROSITE" id="PS00747">
    <property type="entry name" value="GLUTR"/>
    <property type="match status" value="1"/>
</dbReference>
<sequence>MVLFCLVASHRTVDLNTVARLSTGALGVAEDAVSRGALAGAITLSTCNRLELYGELPEHASVDVPGAQQQLAERIARRAGLDERFVLETMDAYEGPEVPRHLFTVVSGLESAVVGEREITGQVRRALAGAQQSGTASPHLVQLFEAAARTAREVGASTGLGERGRSIVSVALDLADDITSGDWPERHALVFGTGAYAGATMAALRDRGCADIEVYSGSGRAQQFTDQRGGSPVTDESLPGALRRADVIIGCSGGSAPMPASRFPAGPRTVVDLALARDFDPAVADLPNVELITLESVRVAAPEETRESVAAAREIVERAARDFENARTARSMDQAIVALRKHTMAVLDAELDKVRTHHGCTGAEEQIEMAMRRMVRSLLHTPTVRARQLAAEGRADEYITGLEALYGLEVAVPDVPEETAPSTRQDPSDTPRPRAVG</sequence>
<protein>
    <recommendedName>
        <fullName evidence="1">Glutamyl-tRNA reductase</fullName>
        <shortName evidence="1">GluTR</shortName>
        <ecNumber evidence="1">1.2.1.70</ecNumber>
    </recommendedName>
</protein>
<organism>
    <name type="scientific">Kocuria rhizophila (strain ATCC 9341 / DSM 348 / NBRC 103217 / DC2201)</name>
    <dbReference type="NCBI Taxonomy" id="378753"/>
    <lineage>
        <taxon>Bacteria</taxon>
        <taxon>Bacillati</taxon>
        <taxon>Actinomycetota</taxon>
        <taxon>Actinomycetes</taxon>
        <taxon>Micrococcales</taxon>
        <taxon>Micrococcaceae</taxon>
        <taxon>Kocuria</taxon>
    </lineage>
</organism>
<comment type="function">
    <text evidence="1">Catalyzes the NADPH-dependent reduction of glutamyl-tRNA(Glu) to glutamate 1-semialdehyde (GSA).</text>
</comment>
<comment type="catalytic activity">
    <reaction evidence="1">
        <text>(S)-4-amino-5-oxopentanoate + tRNA(Glu) + NADP(+) = L-glutamyl-tRNA(Glu) + NADPH + H(+)</text>
        <dbReference type="Rhea" id="RHEA:12344"/>
        <dbReference type="Rhea" id="RHEA-COMP:9663"/>
        <dbReference type="Rhea" id="RHEA-COMP:9680"/>
        <dbReference type="ChEBI" id="CHEBI:15378"/>
        <dbReference type="ChEBI" id="CHEBI:57501"/>
        <dbReference type="ChEBI" id="CHEBI:57783"/>
        <dbReference type="ChEBI" id="CHEBI:58349"/>
        <dbReference type="ChEBI" id="CHEBI:78442"/>
        <dbReference type="ChEBI" id="CHEBI:78520"/>
        <dbReference type="EC" id="1.2.1.70"/>
    </reaction>
</comment>
<comment type="pathway">
    <text evidence="1">Porphyrin-containing compound metabolism; protoporphyrin-IX biosynthesis; 5-aminolevulinate from L-glutamyl-tRNA(Glu): step 1/2.</text>
</comment>
<comment type="subunit">
    <text evidence="1">Homodimer.</text>
</comment>
<comment type="domain">
    <text evidence="1">Possesses an unusual extended V-shaped dimeric structure with each monomer consisting of three distinct domains arranged along a curved 'spinal' alpha-helix. The N-terminal catalytic domain specifically recognizes the glutamate moiety of the substrate. The second domain is the NADPH-binding domain, and the third C-terminal domain is responsible for dimerization.</text>
</comment>
<comment type="miscellaneous">
    <text evidence="1">During catalysis, the active site Cys acts as a nucleophile attacking the alpha-carbonyl group of tRNA-bound glutamate with the formation of a thioester intermediate between enzyme and glutamate, and the concomitant release of tRNA(Glu). The thioester intermediate is finally reduced by direct hydride transfer from NADPH, to form the product GSA.</text>
</comment>
<comment type="similarity">
    <text evidence="1">Belongs to the glutamyl-tRNA reductase family.</text>
</comment>
<feature type="chain" id="PRO_1000190532" description="Glutamyl-tRNA reductase">
    <location>
        <begin position="1"/>
        <end position="437"/>
    </location>
</feature>
<feature type="region of interest" description="Disordered" evidence="2">
    <location>
        <begin position="413"/>
        <end position="437"/>
    </location>
</feature>
<feature type="compositionally biased region" description="Basic and acidic residues" evidence="2">
    <location>
        <begin position="426"/>
        <end position="437"/>
    </location>
</feature>
<feature type="active site" description="Nucleophile" evidence="1">
    <location>
        <position position="47"/>
    </location>
</feature>
<feature type="binding site" evidence="1">
    <location>
        <begin position="46"/>
        <end position="49"/>
    </location>
    <ligand>
        <name>substrate</name>
    </ligand>
</feature>
<feature type="binding site" evidence="1">
    <location>
        <position position="111"/>
    </location>
    <ligand>
        <name>substrate</name>
    </ligand>
</feature>
<feature type="binding site" evidence="1">
    <location>
        <begin position="116"/>
        <end position="118"/>
    </location>
    <ligand>
        <name>substrate</name>
    </ligand>
</feature>
<feature type="binding site" evidence="1">
    <location>
        <position position="122"/>
    </location>
    <ligand>
        <name>substrate</name>
    </ligand>
</feature>
<feature type="binding site" evidence="1">
    <location>
        <begin position="192"/>
        <end position="197"/>
    </location>
    <ligand>
        <name>NADP(+)</name>
        <dbReference type="ChEBI" id="CHEBI:58349"/>
    </ligand>
</feature>
<feature type="site" description="Important for activity" evidence="1">
    <location>
        <position position="101"/>
    </location>
</feature>
<name>HEM1_KOCRD</name>